<feature type="chain" id="PRO_0000081379" description="Uncharacterized protein in glnB 5'region">
    <location>
        <begin position="1" status="less than"/>
        <end position="26"/>
    </location>
</feature>
<feature type="non-terminal residue">
    <location>
        <position position="1"/>
    </location>
</feature>
<sequence>RMAGRNRTEFYKLLSRHELDANDFKE</sequence>
<name>YFHA_KLEOX</name>
<protein>
    <recommendedName>
        <fullName>Uncharacterized protein in glnB 5'region</fullName>
    </recommendedName>
</protein>
<dbReference type="EMBL" id="X14012">
    <property type="protein sequence ID" value="CAA32176.1"/>
    <property type="molecule type" value="Genomic_DNA"/>
</dbReference>
<dbReference type="PIR" id="S04376">
    <property type="entry name" value="S04376"/>
</dbReference>
<dbReference type="STRING" id="571.AB185_14520"/>
<dbReference type="eggNOG" id="COG2204">
    <property type="taxonomic scope" value="Bacteria"/>
</dbReference>
<dbReference type="GO" id="GO:0005524">
    <property type="term" value="F:ATP binding"/>
    <property type="evidence" value="ECO:0007669"/>
    <property type="project" value="UniProtKB-KW"/>
</dbReference>
<dbReference type="GO" id="GO:0003677">
    <property type="term" value="F:DNA binding"/>
    <property type="evidence" value="ECO:0007669"/>
    <property type="project" value="UniProtKB-KW"/>
</dbReference>
<dbReference type="GO" id="GO:0000160">
    <property type="term" value="P:phosphorelay signal transduction system"/>
    <property type="evidence" value="ECO:0007669"/>
    <property type="project" value="UniProtKB-KW"/>
</dbReference>
<proteinExistence type="predicted"/>
<evidence type="ECO:0000305" key="1"/>
<organism>
    <name type="scientific">Klebsiella oxytoca</name>
    <dbReference type="NCBI Taxonomy" id="571"/>
    <lineage>
        <taxon>Bacteria</taxon>
        <taxon>Pseudomonadati</taxon>
        <taxon>Pseudomonadota</taxon>
        <taxon>Gammaproteobacteria</taxon>
        <taxon>Enterobacterales</taxon>
        <taxon>Enterobacteriaceae</taxon>
        <taxon>Klebsiella/Raoultella group</taxon>
        <taxon>Klebsiella</taxon>
    </lineage>
</organism>
<accession>P21710</accession>
<gene>
    <name type="primary">yfhA</name>
</gene>
<keyword id="KW-0067">ATP-binding</keyword>
<keyword id="KW-0238">DNA-binding</keyword>
<keyword id="KW-0547">Nucleotide-binding</keyword>
<keyword id="KW-0597">Phosphoprotein</keyword>
<keyword id="KW-0804">Transcription</keyword>
<keyword id="KW-0805">Transcription regulation</keyword>
<keyword id="KW-0902">Two-component regulatory system</keyword>
<comment type="function">
    <text>Probable member of a two-component regulatory system YfhA/YfhK.</text>
</comment>
<comment type="PTM">
    <text evidence="1">Phosphorylated by YfhK.</text>
</comment>
<reference key="1">
    <citation type="journal article" date="1988" name="Mol. Gen. Genet.">
        <title>Identification of the Klebsiella pneumoniae glnB gene: nucleotide sequence of wild-type and mutant alleles.</title>
        <authorList>
            <person name="Holtel A."/>
            <person name="Merrick M."/>
        </authorList>
    </citation>
    <scope>NUCLEOTIDE SEQUENCE [GENOMIC DNA]</scope>
    <source>
        <strain>M5a1</strain>
    </source>
</reference>